<name>UBC17_ARATH</name>
<proteinExistence type="evidence at transcript level"/>
<keyword id="KW-0067">ATP-binding</keyword>
<keyword id="KW-0547">Nucleotide-binding</keyword>
<keyword id="KW-1185">Reference proteome</keyword>
<keyword id="KW-0808">Transferase</keyword>
<keyword id="KW-0833">Ubl conjugation pathway</keyword>
<gene>
    <name type="primary">UBC17</name>
    <name type="ordered locus">At4g36410</name>
    <name type="ORF">AP22.89</name>
    <name type="ORF">C7A10.950</name>
</gene>
<evidence type="ECO:0000250" key="1">
    <source>
        <dbReference type="UniProtKB" id="P42743"/>
    </source>
</evidence>
<evidence type="ECO:0000255" key="2">
    <source>
        <dbReference type="PROSITE-ProRule" id="PRU00388"/>
    </source>
</evidence>
<evidence type="ECO:0000255" key="3">
    <source>
        <dbReference type="PROSITE-ProRule" id="PRU10133"/>
    </source>
</evidence>
<evidence type="ECO:0000269" key="4">
    <source>
    </source>
</evidence>
<dbReference type="EC" id="2.3.2.23"/>
<dbReference type="EMBL" id="AF028340">
    <property type="protein sequence ID" value="AAC39326.1"/>
    <property type="molecule type" value="mRNA"/>
</dbReference>
<dbReference type="EMBL" id="DQ027031">
    <property type="protein sequence ID" value="AAY44857.1"/>
    <property type="molecule type" value="mRNA"/>
</dbReference>
<dbReference type="EMBL" id="Z99708">
    <property type="protein sequence ID" value="CAB16814.1"/>
    <property type="molecule type" value="Genomic_DNA"/>
</dbReference>
<dbReference type="EMBL" id="AL161589">
    <property type="protein sequence ID" value="CAB80307.1"/>
    <property type="molecule type" value="Genomic_DNA"/>
</dbReference>
<dbReference type="EMBL" id="CP002687">
    <property type="protein sequence ID" value="AEE86653.1"/>
    <property type="molecule type" value="Genomic_DNA"/>
</dbReference>
<dbReference type="EMBL" id="AY088076">
    <property type="protein sequence ID" value="AAM65622.1"/>
    <property type="molecule type" value="mRNA"/>
</dbReference>
<dbReference type="PIR" id="T52053">
    <property type="entry name" value="T52053"/>
</dbReference>
<dbReference type="RefSeq" id="NP_568004.1">
    <property type="nucleotide sequence ID" value="NM_119804.2"/>
</dbReference>
<dbReference type="SMR" id="O23239"/>
<dbReference type="BioGRID" id="15075">
    <property type="interactions" value="17"/>
</dbReference>
<dbReference type="FunCoup" id="O23239">
    <property type="interactions" value="3660"/>
</dbReference>
<dbReference type="STRING" id="3702.O23239"/>
<dbReference type="PaxDb" id="3702-AT4G36410.1"/>
<dbReference type="ProteomicsDB" id="243212"/>
<dbReference type="EnsemblPlants" id="AT4G36410.1">
    <property type="protein sequence ID" value="AT4G36410.1"/>
    <property type="gene ID" value="AT4G36410"/>
</dbReference>
<dbReference type="GeneID" id="829793"/>
<dbReference type="Gramene" id="AT4G36410.1">
    <property type="protein sequence ID" value="AT4G36410.1"/>
    <property type="gene ID" value="AT4G36410"/>
</dbReference>
<dbReference type="KEGG" id="ath:AT4G36410"/>
<dbReference type="Araport" id="AT4G36410"/>
<dbReference type="TAIR" id="AT4G36410">
    <property type="gene designation" value="UBC17"/>
</dbReference>
<dbReference type="eggNOG" id="KOG0427">
    <property type="taxonomic scope" value="Eukaryota"/>
</dbReference>
<dbReference type="HOGENOM" id="CLU_030988_15_1_1"/>
<dbReference type="InParanoid" id="O23239"/>
<dbReference type="OMA" id="NCKHGRS"/>
<dbReference type="OrthoDB" id="406833at2759"/>
<dbReference type="PhylomeDB" id="O23239"/>
<dbReference type="UniPathway" id="UPA00143"/>
<dbReference type="PRO" id="PR:O23239"/>
<dbReference type="Proteomes" id="UP000006548">
    <property type="component" value="Chromosome 4"/>
</dbReference>
<dbReference type="ExpressionAtlas" id="O23239">
    <property type="expression patterns" value="baseline and differential"/>
</dbReference>
<dbReference type="GO" id="GO:0005524">
    <property type="term" value="F:ATP binding"/>
    <property type="evidence" value="ECO:0007669"/>
    <property type="project" value="UniProtKB-KW"/>
</dbReference>
<dbReference type="GO" id="GO:0061631">
    <property type="term" value="F:ubiquitin conjugating enzyme activity"/>
    <property type="evidence" value="ECO:0007669"/>
    <property type="project" value="UniProtKB-EC"/>
</dbReference>
<dbReference type="GO" id="GO:0016567">
    <property type="term" value="P:protein ubiquitination"/>
    <property type="evidence" value="ECO:0007669"/>
    <property type="project" value="UniProtKB-UniPathway"/>
</dbReference>
<dbReference type="GO" id="GO:0009739">
    <property type="term" value="P:response to gibberellin"/>
    <property type="evidence" value="ECO:0000270"/>
    <property type="project" value="TAIR"/>
</dbReference>
<dbReference type="CDD" id="cd23808">
    <property type="entry name" value="UBCc_UBE2W"/>
    <property type="match status" value="1"/>
</dbReference>
<dbReference type="FunFam" id="3.10.110.10:FF:000032">
    <property type="entry name" value="probable ubiquitin-conjugating enzyme E2 16"/>
    <property type="match status" value="1"/>
</dbReference>
<dbReference type="Gene3D" id="3.10.110.10">
    <property type="entry name" value="Ubiquitin Conjugating Enzyme"/>
    <property type="match status" value="1"/>
</dbReference>
<dbReference type="InterPro" id="IPR050113">
    <property type="entry name" value="Ub_conjugating_enzyme"/>
</dbReference>
<dbReference type="InterPro" id="IPR000608">
    <property type="entry name" value="UBQ-conjugat_E2_core"/>
</dbReference>
<dbReference type="InterPro" id="IPR023313">
    <property type="entry name" value="UBQ-conjugating_AS"/>
</dbReference>
<dbReference type="InterPro" id="IPR016135">
    <property type="entry name" value="UBQ-conjugating_enzyme/RWD"/>
</dbReference>
<dbReference type="PANTHER" id="PTHR24067">
    <property type="entry name" value="UBIQUITIN-CONJUGATING ENZYME E2"/>
    <property type="match status" value="1"/>
</dbReference>
<dbReference type="Pfam" id="PF00179">
    <property type="entry name" value="UQ_con"/>
    <property type="match status" value="1"/>
</dbReference>
<dbReference type="SMART" id="SM00212">
    <property type="entry name" value="UBCc"/>
    <property type="match status" value="1"/>
</dbReference>
<dbReference type="SUPFAM" id="SSF54495">
    <property type="entry name" value="UBC-like"/>
    <property type="match status" value="1"/>
</dbReference>
<dbReference type="PROSITE" id="PS00183">
    <property type="entry name" value="UBC_1"/>
    <property type="match status" value="1"/>
</dbReference>
<dbReference type="PROSITE" id="PS50127">
    <property type="entry name" value="UBC_2"/>
    <property type="match status" value="1"/>
</dbReference>
<organism>
    <name type="scientific">Arabidopsis thaliana</name>
    <name type="common">Mouse-ear cress</name>
    <dbReference type="NCBI Taxonomy" id="3702"/>
    <lineage>
        <taxon>Eukaryota</taxon>
        <taxon>Viridiplantae</taxon>
        <taxon>Streptophyta</taxon>
        <taxon>Embryophyta</taxon>
        <taxon>Tracheophyta</taxon>
        <taxon>Spermatophyta</taxon>
        <taxon>Magnoliopsida</taxon>
        <taxon>eudicotyledons</taxon>
        <taxon>Gunneridae</taxon>
        <taxon>Pentapetalae</taxon>
        <taxon>rosids</taxon>
        <taxon>malvids</taxon>
        <taxon>Brassicales</taxon>
        <taxon>Brassicaceae</taxon>
        <taxon>Camelineae</taxon>
        <taxon>Arabidopsis</taxon>
    </lineage>
</organism>
<comment type="function">
    <text evidence="1">Accepts the ubiquitin from the E1 complex and catalyzes its covalent attachment to other proteins.</text>
</comment>
<comment type="catalytic activity">
    <reaction evidence="2 3">
        <text>S-ubiquitinyl-[E1 ubiquitin-activating enzyme]-L-cysteine + [E2 ubiquitin-conjugating enzyme]-L-cysteine = [E1 ubiquitin-activating enzyme]-L-cysteine + S-ubiquitinyl-[E2 ubiquitin-conjugating enzyme]-L-cysteine.</text>
        <dbReference type="EC" id="2.3.2.23"/>
    </reaction>
</comment>
<comment type="pathway">
    <text evidence="2">Protein modification; protein ubiquitination.</text>
</comment>
<comment type="induction">
    <text evidence="4">By biotic stresses.</text>
</comment>
<comment type="similarity">
    <text evidence="2">Belongs to the ubiquitin-conjugating enzyme family.</text>
</comment>
<sequence length="161" mass="18674">MTSSSESTRKGLTKIATNRLQKEFMEWQTNPPSGFKHRVSDNLQRWIIEVHGVPGTLYANETYQLQVEFPEHYPMEAPQVIFQHPAPLHPHIYSNGHICLDVLYDSWSPAMRLSSICLSILSMLSSSSVKQKPKDNDHYLKNCKHGRSPKETRWRFHDDKV</sequence>
<reference key="1">
    <citation type="online journal article" date="1997" name="Plant Gene Register">
        <title>A new family of ubiquitin-conjugating enzymes (E2S) AtUBC15/16/17/18 in Arabidopsis thaliana.</title>
        <authorList>
            <person name="Yan N."/>
            <person name="Doelling J."/>
            <person name="Vierstra R.D."/>
        </authorList>
        <locator>PGR97-174</locator>
    </citation>
    <scope>NUCLEOTIDE SEQUENCE [GENOMIC DNA]</scope>
    <source>
        <strain>cv. Columbia</strain>
    </source>
</reference>
<reference key="2">
    <citation type="journal article" date="2005" name="Plant Physiol.">
        <title>Genome analysis and functional characterization of the E2 and RING-type E3 ligase ubiquitination enzymes of Arabidopsis.</title>
        <authorList>
            <person name="Kraft E."/>
            <person name="Stone S.L."/>
            <person name="Ma L."/>
            <person name="Su N."/>
            <person name="Gao Y."/>
            <person name="Lau O.-S."/>
            <person name="Deng X.-W."/>
            <person name="Callis J."/>
        </authorList>
    </citation>
    <scope>NUCLEOTIDE SEQUENCE [MRNA]</scope>
    <scope>INDUCTION</scope>
    <scope>GENE FAMILY</scope>
    <scope>NOMENCLATURE</scope>
</reference>
<reference key="3">
    <citation type="journal article" date="1998" name="Nature">
        <title>Analysis of 1.9 Mb of contiguous sequence from chromosome 4 of Arabidopsis thaliana.</title>
        <authorList>
            <person name="Bevan M."/>
            <person name="Bancroft I."/>
            <person name="Bent E."/>
            <person name="Love K."/>
            <person name="Goodman H.M."/>
            <person name="Dean C."/>
            <person name="Bergkamp R."/>
            <person name="Dirkse W."/>
            <person name="van Staveren M."/>
            <person name="Stiekema W."/>
            <person name="Drost L."/>
            <person name="Ridley P."/>
            <person name="Hudson S.-A."/>
            <person name="Patel K."/>
            <person name="Murphy G."/>
            <person name="Piffanelli P."/>
            <person name="Wedler H."/>
            <person name="Wedler E."/>
            <person name="Wambutt R."/>
            <person name="Weitzenegger T."/>
            <person name="Pohl T."/>
            <person name="Terryn N."/>
            <person name="Gielen J."/>
            <person name="Villarroel R."/>
            <person name="De Clercq R."/>
            <person name="van Montagu M."/>
            <person name="Lecharny A."/>
            <person name="Aubourg S."/>
            <person name="Gy I."/>
            <person name="Kreis M."/>
            <person name="Lao N."/>
            <person name="Kavanagh T."/>
            <person name="Hempel S."/>
            <person name="Kotter P."/>
            <person name="Entian K.-D."/>
            <person name="Rieger M."/>
            <person name="Schaefer M."/>
            <person name="Funk B."/>
            <person name="Mueller-Auer S."/>
            <person name="Silvey M."/>
            <person name="James R."/>
            <person name="Monfort A."/>
            <person name="Pons A."/>
            <person name="Puigdomenech P."/>
            <person name="Douka A."/>
            <person name="Voukelatou E."/>
            <person name="Milioni D."/>
            <person name="Hatzopoulos P."/>
            <person name="Piravandi E."/>
            <person name="Obermaier B."/>
            <person name="Hilbert H."/>
            <person name="Duesterhoeft A."/>
            <person name="Moores T."/>
            <person name="Jones J.D.G."/>
            <person name="Eneva T."/>
            <person name="Palme K."/>
            <person name="Benes V."/>
            <person name="Rechmann S."/>
            <person name="Ansorge W."/>
            <person name="Cooke R."/>
            <person name="Berger C."/>
            <person name="Delseny M."/>
            <person name="Voet M."/>
            <person name="Volckaert G."/>
            <person name="Mewes H.-W."/>
            <person name="Klosterman S."/>
            <person name="Schueller C."/>
            <person name="Chalwatzis N."/>
        </authorList>
    </citation>
    <scope>NUCLEOTIDE SEQUENCE [LARGE SCALE GENOMIC DNA]</scope>
    <source>
        <strain>cv. Columbia</strain>
    </source>
</reference>
<reference key="4">
    <citation type="journal article" date="1999" name="Nature">
        <title>Sequence and analysis of chromosome 4 of the plant Arabidopsis thaliana.</title>
        <authorList>
            <person name="Mayer K.F.X."/>
            <person name="Schueller C."/>
            <person name="Wambutt R."/>
            <person name="Murphy G."/>
            <person name="Volckaert G."/>
            <person name="Pohl T."/>
            <person name="Duesterhoeft A."/>
            <person name="Stiekema W."/>
            <person name="Entian K.-D."/>
            <person name="Terryn N."/>
            <person name="Harris B."/>
            <person name="Ansorge W."/>
            <person name="Brandt P."/>
            <person name="Grivell L.A."/>
            <person name="Rieger M."/>
            <person name="Weichselgartner M."/>
            <person name="de Simone V."/>
            <person name="Obermaier B."/>
            <person name="Mache R."/>
            <person name="Mueller M."/>
            <person name="Kreis M."/>
            <person name="Delseny M."/>
            <person name="Puigdomenech P."/>
            <person name="Watson M."/>
            <person name="Schmidtheini T."/>
            <person name="Reichert B."/>
            <person name="Portetelle D."/>
            <person name="Perez-Alonso M."/>
            <person name="Boutry M."/>
            <person name="Bancroft I."/>
            <person name="Vos P."/>
            <person name="Hoheisel J."/>
            <person name="Zimmermann W."/>
            <person name="Wedler H."/>
            <person name="Ridley P."/>
            <person name="Langham S.-A."/>
            <person name="McCullagh B."/>
            <person name="Bilham L."/>
            <person name="Robben J."/>
            <person name="van der Schueren J."/>
            <person name="Grymonprez B."/>
            <person name="Chuang Y.-J."/>
            <person name="Vandenbussche F."/>
            <person name="Braeken M."/>
            <person name="Weltjens I."/>
            <person name="Voet M."/>
            <person name="Bastiaens I."/>
            <person name="Aert R."/>
            <person name="Defoor E."/>
            <person name="Weitzenegger T."/>
            <person name="Bothe G."/>
            <person name="Ramsperger U."/>
            <person name="Hilbert H."/>
            <person name="Braun M."/>
            <person name="Holzer E."/>
            <person name="Brandt A."/>
            <person name="Peters S."/>
            <person name="van Staveren M."/>
            <person name="Dirkse W."/>
            <person name="Mooijman P."/>
            <person name="Klein Lankhorst R."/>
            <person name="Rose M."/>
            <person name="Hauf J."/>
            <person name="Koetter P."/>
            <person name="Berneiser S."/>
            <person name="Hempel S."/>
            <person name="Feldpausch M."/>
            <person name="Lamberth S."/>
            <person name="Van den Daele H."/>
            <person name="De Keyser A."/>
            <person name="Buysshaert C."/>
            <person name="Gielen J."/>
            <person name="Villarroel R."/>
            <person name="De Clercq R."/>
            <person name="van Montagu M."/>
            <person name="Rogers J."/>
            <person name="Cronin A."/>
            <person name="Quail M.A."/>
            <person name="Bray-Allen S."/>
            <person name="Clark L."/>
            <person name="Doggett J."/>
            <person name="Hall S."/>
            <person name="Kay M."/>
            <person name="Lennard N."/>
            <person name="McLay K."/>
            <person name="Mayes R."/>
            <person name="Pettett A."/>
            <person name="Rajandream M.A."/>
            <person name="Lyne M."/>
            <person name="Benes V."/>
            <person name="Rechmann S."/>
            <person name="Borkova D."/>
            <person name="Bloecker H."/>
            <person name="Scharfe M."/>
            <person name="Grimm M."/>
            <person name="Loehnert T.-H."/>
            <person name="Dose S."/>
            <person name="de Haan M."/>
            <person name="Maarse A.C."/>
            <person name="Schaefer M."/>
            <person name="Mueller-Auer S."/>
            <person name="Gabel C."/>
            <person name="Fuchs M."/>
            <person name="Fartmann B."/>
            <person name="Granderath K."/>
            <person name="Dauner D."/>
            <person name="Herzl A."/>
            <person name="Neumann S."/>
            <person name="Argiriou A."/>
            <person name="Vitale D."/>
            <person name="Liguori R."/>
            <person name="Piravandi E."/>
            <person name="Massenet O."/>
            <person name="Quigley F."/>
            <person name="Clabauld G."/>
            <person name="Muendlein A."/>
            <person name="Felber R."/>
            <person name="Schnabl S."/>
            <person name="Hiller R."/>
            <person name="Schmidt W."/>
            <person name="Lecharny A."/>
            <person name="Aubourg S."/>
            <person name="Chefdor F."/>
            <person name="Cooke R."/>
            <person name="Berger C."/>
            <person name="Monfort A."/>
            <person name="Casacuberta E."/>
            <person name="Gibbons T."/>
            <person name="Weber N."/>
            <person name="Vandenbol M."/>
            <person name="Bargues M."/>
            <person name="Terol J."/>
            <person name="Torres A."/>
            <person name="Perez-Perez A."/>
            <person name="Purnelle B."/>
            <person name="Bent E."/>
            <person name="Johnson S."/>
            <person name="Tacon D."/>
            <person name="Jesse T."/>
            <person name="Heijnen L."/>
            <person name="Schwarz S."/>
            <person name="Scholler P."/>
            <person name="Heber S."/>
            <person name="Francs P."/>
            <person name="Bielke C."/>
            <person name="Frishman D."/>
            <person name="Haase D."/>
            <person name="Lemcke K."/>
            <person name="Mewes H.-W."/>
            <person name="Stocker S."/>
            <person name="Zaccaria P."/>
            <person name="Bevan M."/>
            <person name="Wilson R.K."/>
            <person name="de la Bastide M."/>
            <person name="Habermann K."/>
            <person name="Parnell L."/>
            <person name="Dedhia N."/>
            <person name="Gnoj L."/>
            <person name="Schutz K."/>
            <person name="Huang E."/>
            <person name="Spiegel L."/>
            <person name="Sekhon M."/>
            <person name="Murray J."/>
            <person name="Sheet P."/>
            <person name="Cordes M."/>
            <person name="Abu-Threideh J."/>
            <person name="Stoneking T."/>
            <person name="Kalicki J."/>
            <person name="Graves T."/>
            <person name="Harmon G."/>
            <person name="Edwards J."/>
            <person name="Latreille P."/>
            <person name="Courtney L."/>
            <person name="Cloud J."/>
            <person name="Abbott A."/>
            <person name="Scott K."/>
            <person name="Johnson D."/>
            <person name="Minx P."/>
            <person name="Bentley D."/>
            <person name="Fulton B."/>
            <person name="Miller N."/>
            <person name="Greco T."/>
            <person name="Kemp K."/>
            <person name="Kramer J."/>
            <person name="Fulton L."/>
            <person name="Mardis E."/>
            <person name="Dante M."/>
            <person name="Pepin K."/>
            <person name="Hillier L.W."/>
            <person name="Nelson J."/>
            <person name="Spieth J."/>
            <person name="Ryan E."/>
            <person name="Andrews S."/>
            <person name="Geisel C."/>
            <person name="Layman D."/>
            <person name="Du H."/>
            <person name="Ali J."/>
            <person name="Berghoff A."/>
            <person name="Jones K."/>
            <person name="Drone K."/>
            <person name="Cotton M."/>
            <person name="Joshu C."/>
            <person name="Antonoiu B."/>
            <person name="Zidanic M."/>
            <person name="Strong C."/>
            <person name="Sun H."/>
            <person name="Lamar B."/>
            <person name="Yordan C."/>
            <person name="Ma P."/>
            <person name="Zhong J."/>
            <person name="Preston R."/>
            <person name="Vil D."/>
            <person name="Shekher M."/>
            <person name="Matero A."/>
            <person name="Shah R."/>
            <person name="Swaby I.K."/>
            <person name="O'Shaughnessy A."/>
            <person name="Rodriguez M."/>
            <person name="Hoffman J."/>
            <person name="Till S."/>
            <person name="Granat S."/>
            <person name="Shohdy N."/>
            <person name="Hasegawa A."/>
            <person name="Hameed A."/>
            <person name="Lodhi M."/>
            <person name="Johnson A."/>
            <person name="Chen E."/>
            <person name="Marra M.A."/>
            <person name="Martienssen R."/>
            <person name="McCombie W.R."/>
        </authorList>
    </citation>
    <scope>NUCLEOTIDE SEQUENCE [LARGE SCALE GENOMIC DNA]</scope>
    <source>
        <strain>cv. Columbia</strain>
    </source>
</reference>
<reference key="5">
    <citation type="journal article" date="2017" name="Plant J.">
        <title>Araport11: a complete reannotation of the Arabidopsis thaliana reference genome.</title>
        <authorList>
            <person name="Cheng C.Y."/>
            <person name="Krishnakumar V."/>
            <person name="Chan A.P."/>
            <person name="Thibaud-Nissen F."/>
            <person name="Schobel S."/>
            <person name="Town C.D."/>
        </authorList>
    </citation>
    <scope>GENOME REANNOTATION</scope>
    <source>
        <strain>cv. Columbia</strain>
    </source>
</reference>
<reference key="6">
    <citation type="submission" date="2002-03" db="EMBL/GenBank/DDBJ databases">
        <title>Full-length cDNA from Arabidopsis thaliana.</title>
        <authorList>
            <person name="Brover V.V."/>
            <person name="Troukhan M.E."/>
            <person name="Alexandrov N.A."/>
            <person name="Lu Y.-P."/>
            <person name="Flavell R.B."/>
            <person name="Feldmann K.A."/>
        </authorList>
    </citation>
    <scope>NUCLEOTIDE SEQUENCE [LARGE SCALE MRNA]</scope>
</reference>
<protein>
    <recommendedName>
        <fullName>Probable ubiquitin-conjugating enzyme E2 17</fullName>
        <ecNumber>2.3.2.23</ecNumber>
    </recommendedName>
    <alternativeName>
        <fullName>E2 ubiquitin-conjugating enzyme 17</fullName>
    </alternativeName>
    <alternativeName>
        <fullName>Ubiquitin carrier protein 17</fullName>
    </alternativeName>
</protein>
<feature type="chain" id="PRO_0000345183" description="Probable ubiquitin-conjugating enzyme E2 17">
    <location>
        <begin position="1"/>
        <end position="161"/>
    </location>
</feature>
<feature type="domain" description="UBC core" evidence="2">
    <location>
        <begin position="15"/>
        <end position="161"/>
    </location>
</feature>
<feature type="active site" description="Glycyl thioester intermediate" evidence="2 3">
    <location>
        <position position="99"/>
    </location>
</feature>
<accession>O23239</accession>